<proteinExistence type="evidence at protein level"/>
<protein>
    <recommendedName>
        <fullName evidence="6 7">Cuticlin-like protein 19</fullName>
    </recommendedName>
</protein>
<comment type="subunit">
    <text evidence="2">Interacts with vps-51 and vps-52.</text>
</comment>
<comment type="subcellular location">
    <subcellularLocation>
        <location evidence="2">Golgi apparatus</location>
        <location evidence="2">trans-Golgi network</location>
    </subcellularLocation>
</comment>
<comment type="alternative products">
    <event type="alternative splicing"/>
    <isoform>
        <id>H2KZ72-1</id>
        <name evidence="3">b</name>
        <sequence type="displayed"/>
    </isoform>
    <isoform>
        <id>H2KZ72-2</id>
        <name evidence="3">a</name>
        <sequence type="described" ref="VSP_045746"/>
    </isoform>
</comment>
<comment type="tissue specificity">
    <text evidence="2">Expression detected in motor neurons.</text>
</comment>
<accession>H2KZ72</accession>
<accession>Q8I7F6</accession>
<sequence length="237" mass="27264">MVEYNRIFCVLVIFSTTIKCEYSELMNQKIGVRVEVLNMIYENETTITSTGHPRCRLTLHKSGWDRDTCSSPQFKLNDTLSWSTRVCYKWVCDTTKYAMRVESCWIGSPNMSVYILRDDGCTIEKAILTSPVYTSFNRAAAIGWMAVRQKNMKYMHVGCTIRLCHLCDPKCQTITPPRTCNDNRADDYEAMWNSSSRVKNLCFPEPSTTENLNLNFGNSPFQNVGNIIILLLVFLLR</sequence>
<evidence type="ECO:0000255" key="1"/>
<evidence type="ECO:0000269" key="2">
    <source>
    </source>
</evidence>
<evidence type="ECO:0000269" key="3">
    <source>
    </source>
</evidence>
<evidence type="ECO:0000303" key="4">
    <source>
    </source>
</evidence>
<evidence type="ECO:0000305" key="5"/>
<evidence type="ECO:0000312" key="6">
    <source>
        <dbReference type="EMBL" id="CCD66677.1"/>
    </source>
</evidence>
<evidence type="ECO:0000312" key="7">
    <source>
        <dbReference type="WormBase" id="ZC155.5a"/>
    </source>
</evidence>
<dbReference type="EMBL" id="FO080776">
    <property type="protein sequence ID" value="CCD66676.1"/>
    <property type="molecule type" value="Genomic_DNA"/>
</dbReference>
<dbReference type="EMBL" id="FO080776">
    <property type="protein sequence ID" value="CCD66677.1"/>
    <property type="molecule type" value="Genomic_DNA"/>
</dbReference>
<dbReference type="RefSeq" id="NP_498107.2">
    <molecule id="H2KZ72-2"/>
    <property type="nucleotide sequence ID" value="NM_065706.4"/>
</dbReference>
<dbReference type="RefSeq" id="NP_871693.1">
    <molecule id="H2KZ72-1"/>
    <property type="nucleotide sequence ID" value="NM_181964.4"/>
</dbReference>
<dbReference type="SMR" id="H2KZ72"/>
<dbReference type="BioGRID" id="55640">
    <property type="interactions" value="4"/>
</dbReference>
<dbReference type="FunCoup" id="H2KZ72">
    <property type="interactions" value="194"/>
</dbReference>
<dbReference type="IntAct" id="H2KZ72">
    <property type="interactions" value="3"/>
</dbReference>
<dbReference type="STRING" id="6239.ZC155.5b.1"/>
<dbReference type="PaxDb" id="6239-ZC155.5b"/>
<dbReference type="PeptideAtlas" id="H2KZ72"/>
<dbReference type="EnsemblMetazoa" id="ZC155.5a.1">
    <molecule id="H2KZ72-2"/>
    <property type="protein sequence ID" value="ZC155.5a.1"/>
    <property type="gene ID" value="WBGene00022533"/>
</dbReference>
<dbReference type="EnsemblMetazoa" id="ZC155.5b.1">
    <molecule id="H2KZ72-1"/>
    <property type="protein sequence ID" value="ZC155.5b.1"/>
    <property type="gene ID" value="WBGene00022533"/>
</dbReference>
<dbReference type="GeneID" id="191090"/>
<dbReference type="KEGG" id="cel:CELE_ZC155.5"/>
<dbReference type="UCSC" id="ZC155.5b">
    <property type="organism name" value="c. elegans"/>
</dbReference>
<dbReference type="AGR" id="WB:WBGene00022533"/>
<dbReference type="CTD" id="191090"/>
<dbReference type="WormBase" id="ZC155.5a">
    <molecule id="H2KZ72-2"/>
    <property type="protein sequence ID" value="CE33007"/>
    <property type="gene ID" value="WBGene00022533"/>
    <property type="gene designation" value="cutl-19"/>
</dbReference>
<dbReference type="WormBase" id="ZC155.5b">
    <molecule id="H2KZ72-1"/>
    <property type="protein sequence ID" value="CE33008"/>
    <property type="gene ID" value="WBGene00022533"/>
    <property type="gene designation" value="cutl-19"/>
</dbReference>
<dbReference type="eggNOG" id="ENOG502SRI6">
    <property type="taxonomic scope" value="Eukaryota"/>
</dbReference>
<dbReference type="GeneTree" id="ENSGT00940000163650"/>
<dbReference type="HOGENOM" id="CLU_1300718_0_0_1"/>
<dbReference type="InParanoid" id="H2KZ72"/>
<dbReference type="OMA" id="YAMRVES"/>
<dbReference type="OrthoDB" id="5788531at2759"/>
<dbReference type="PhylomeDB" id="H2KZ72"/>
<dbReference type="PRO" id="PR:H2KZ72"/>
<dbReference type="Proteomes" id="UP000001940">
    <property type="component" value="Chromosome III"/>
</dbReference>
<dbReference type="Bgee" id="WBGene00022533">
    <property type="expression patterns" value="Expressed in larva and 3 other cell types or tissues"/>
</dbReference>
<dbReference type="GO" id="GO:0005794">
    <property type="term" value="C:Golgi apparatus"/>
    <property type="evidence" value="ECO:0000314"/>
    <property type="project" value="UniProtKB"/>
</dbReference>
<dbReference type="InterPro" id="IPR051962">
    <property type="entry name" value="Cuticlin"/>
</dbReference>
<dbReference type="InterPro" id="IPR001507">
    <property type="entry name" value="ZP_dom"/>
</dbReference>
<dbReference type="PANTHER" id="PTHR22907:SF59">
    <property type="entry name" value="CUTICLIN-LIKE PROTEIN 19"/>
    <property type="match status" value="1"/>
</dbReference>
<dbReference type="PANTHER" id="PTHR22907">
    <property type="entry name" value="GH04558P"/>
    <property type="match status" value="1"/>
</dbReference>
<reference evidence="5" key="1">
    <citation type="journal article" date="1998" name="Science">
        <title>Genome sequence of the nematode C. elegans: a platform for investigating biology.</title>
        <authorList>
            <consortium name="The C. elegans sequencing consortium"/>
        </authorList>
    </citation>
    <scope>NUCLEOTIDE SEQUENCE [LARGE SCALE GENOMIC DNA]</scope>
    <scope>ALTERNATIVE SPLICING</scope>
    <source>
        <strain>Bristol N2</strain>
    </source>
</reference>
<reference evidence="5" key="2">
    <citation type="journal article" date="2011" name="Mol. Biol. Cell">
        <title>The Caenorhabditis elegans GARP complex contains the conserved Vps51 subunit and is required to maintain lysosomal morphology.</title>
        <authorList>
            <person name="Luo L."/>
            <person name="Hannemann M."/>
            <person name="Koenig S."/>
            <person name="Hegermann J."/>
            <person name="Ailion M."/>
            <person name="Cho M.K."/>
            <person name="Sasidharan N."/>
            <person name="Zweckstetter M."/>
            <person name="Rensing S.A."/>
            <person name="Eimer S."/>
        </authorList>
    </citation>
    <scope>SUBCELLULAR LOCATION</scope>
    <scope>INTERACTION WITH VPS-51 AND VPS-52</scope>
    <scope>TISSUE SPECIFICITY</scope>
</reference>
<keyword id="KW-0025">Alternative splicing</keyword>
<keyword id="KW-0333">Golgi apparatus</keyword>
<keyword id="KW-1185">Reference proteome</keyword>
<keyword id="KW-0732">Signal</keyword>
<organism>
    <name type="scientific">Caenorhabditis elegans</name>
    <dbReference type="NCBI Taxonomy" id="6239"/>
    <lineage>
        <taxon>Eukaryota</taxon>
        <taxon>Metazoa</taxon>
        <taxon>Ecdysozoa</taxon>
        <taxon>Nematoda</taxon>
        <taxon>Chromadorea</taxon>
        <taxon>Rhabditida</taxon>
        <taxon>Rhabditina</taxon>
        <taxon>Rhabditomorpha</taxon>
        <taxon>Rhabditoidea</taxon>
        <taxon>Rhabditidae</taxon>
        <taxon>Peloderinae</taxon>
        <taxon>Caenorhabditis</taxon>
    </lineage>
</organism>
<gene>
    <name type="primary">cutl-19</name>
    <name evidence="6 7" type="synonym">syx-16</name>
    <name type="ORF">ZC155.5</name>
</gene>
<name>CUT19_CAEEL</name>
<feature type="signal peptide" evidence="1">
    <location>
        <begin position="1"/>
        <end position="20"/>
    </location>
</feature>
<feature type="chain" id="PRO_0000421466" description="Cuticlin-like protein 19" evidence="1">
    <location>
        <begin position="21"/>
        <end position="237"/>
    </location>
</feature>
<feature type="splice variant" id="VSP_045746" description="In isoform a." evidence="4">
    <location>
        <begin position="62"/>
        <end position="66"/>
    </location>
</feature>